<keyword id="KW-0007">Acetylation</keyword>
<keyword id="KW-0010">Activator</keyword>
<keyword id="KW-0014">AIDS</keyword>
<keyword id="KW-0025">Alternative splicing</keyword>
<keyword id="KW-0053">Apoptosis</keyword>
<keyword id="KW-1035">Host cytoplasm</keyword>
<keyword id="KW-1048">Host nucleus</keyword>
<keyword id="KW-0945">Host-virus interaction</keyword>
<keyword id="KW-1090">Inhibition of host innate immune response by virus</keyword>
<keyword id="KW-1114">Inhibition of host interferon signaling pathway by virus</keyword>
<keyword id="KW-0922">Interferon antiviral system evasion</keyword>
<keyword id="KW-1017">Isopeptide bond</keyword>
<keyword id="KW-0479">Metal-binding</keyword>
<keyword id="KW-0488">Methylation</keyword>
<keyword id="KW-1122">Modulation of host chromatin by virus</keyword>
<keyword id="KW-1126">Modulation of host PP1 activity by virus</keyword>
<keyword id="KW-0597">Phosphoprotein</keyword>
<keyword id="KW-1185">Reference proteome</keyword>
<keyword id="KW-0694">RNA-binding</keyword>
<keyword id="KW-0964">Secreted</keyword>
<keyword id="KW-0804">Transcription</keyword>
<keyword id="KW-0805">Transcription regulation</keyword>
<keyword id="KW-0832">Ubl conjugation</keyword>
<keyword id="KW-0899">Viral immunoevasion</keyword>
<keyword id="KW-0862">Zinc</keyword>
<feature type="chain" id="PRO_0000085356" description="Protein Tat">
    <location>
        <begin position="1"/>
        <end position="101"/>
    </location>
</feature>
<feature type="region of interest" description="Transactivation" evidence="1">
    <location>
        <begin position="1"/>
        <end position="48"/>
    </location>
</feature>
<feature type="region of interest" description="Interaction with human CREBBP" evidence="1">
    <location>
        <begin position="1"/>
        <end position="24"/>
    </location>
</feature>
<feature type="region of interest" description="Disordered" evidence="2">
    <location>
        <begin position="1"/>
        <end position="20"/>
    </location>
</feature>
<feature type="region of interest" description="Cysteine-rich" evidence="1">
    <location>
        <begin position="22"/>
        <end position="37"/>
    </location>
</feature>
<feature type="region of interest" description="Core" evidence="1">
    <location>
        <begin position="38"/>
        <end position="48"/>
    </location>
</feature>
<feature type="region of interest" description="Disordered" evidence="2">
    <location>
        <begin position="47"/>
        <end position="101"/>
    </location>
</feature>
<feature type="region of interest" description="Interaction with the host capping enzyme RNGTT" evidence="1">
    <location>
        <begin position="49"/>
        <end position="86"/>
    </location>
</feature>
<feature type="short sequence motif" description="Nuclear localization signal, RNA-binding (TAR), and protein transduction" evidence="1">
    <location>
        <begin position="49"/>
        <end position="57"/>
    </location>
</feature>
<feature type="short sequence motif" description="Cell attachment site" evidence="1">
    <location>
        <begin position="78"/>
        <end position="80"/>
    </location>
</feature>
<feature type="compositionally biased region" description="Basic and acidic residues" evidence="2">
    <location>
        <begin position="1"/>
        <end position="12"/>
    </location>
</feature>
<feature type="compositionally biased region" description="Basic and acidic residues" evidence="2">
    <location>
        <begin position="83"/>
        <end position="101"/>
    </location>
</feature>
<feature type="binding site" evidence="1">
    <location>
        <position position="22"/>
    </location>
    <ligand>
        <name>Zn(2+)</name>
        <dbReference type="ChEBI" id="CHEBI:29105"/>
        <label>1</label>
    </ligand>
</feature>
<feature type="binding site" evidence="1">
    <location>
        <position position="25"/>
    </location>
    <ligand>
        <name>Zn(2+)</name>
        <dbReference type="ChEBI" id="CHEBI:29105"/>
        <label>2</label>
    </ligand>
</feature>
<feature type="binding site" evidence="1">
    <location>
        <position position="27"/>
    </location>
    <ligand>
        <name>Zn(2+)</name>
        <dbReference type="ChEBI" id="CHEBI:29105"/>
        <label>2</label>
    </ligand>
</feature>
<feature type="binding site" evidence="1">
    <location>
        <position position="30"/>
    </location>
    <ligand>
        <name>Zn(2+)</name>
        <dbReference type="ChEBI" id="CHEBI:29105"/>
        <label>2</label>
    </ligand>
</feature>
<feature type="binding site" evidence="1">
    <location>
        <position position="33"/>
    </location>
    <ligand>
        <name>Zn(2+)</name>
        <dbReference type="ChEBI" id="CHEBI:29105"/>
        <label>1</label>
    </ligand>
</feature>
<feature type="binding site" evidence="1">
    <location>
        <position position="34"/>
    </location>
    <ligand>
        <name>Zn(2+)</name>
        <dbReference type="ChEBI" id="CHEBI:29105"/>
        <label>1</label>
    </ligand>
</feature>
<feature type="binding site" evidence="1">
    <location>
        <position position="37"/>
    </location>
    <ligand>
        <name>Zn(2+)</name>
        <dbReference type="ChEBI" id="CHEBI:29105"/>
        <label>1</label>
    </ligand>
</feature>
<feature type="site" description="Essential for Tat translocation through the endosomal membrane" evidence="1">
    <location>
        <position position="11"/>
    </location>
</feature>
<feature type="modified residue" description="N6-acetyllysine; by host PCAF" evidence="1">
    <location>
        <position position="28"/>
    </location>
</feature>
<feature type="modified residue" description="N6-acetyllysine; by host EP300 and GCN5L2" evidence="1">
    <location>
        <position position="50"/>
    </location>
</feature>
<feature type="modified residue" description="N6-acetyllysine; by host EP300 and GCN5L2" evidence="1">
    <location>
        <position position="51"/>
    </location>
</feature>
<feature type="modified residue" description="Asymmetric dimethylarginine; by host PRMT6" evidence="1">
    <location>
        <position position="52"/>
    </location>
</feature>
<feature type="modified residue" description="Asymmetric dimethylarginine; by host PRMT6" evidence="1">
    <location>
        <position position="53"/>
    </location>
</feature>
<feature type="cross-link" description="Glycyl lysine isopeptide (Lys-Gly) (interchain with G-Cter in ubiquitin)" evidence="1">
    <location>
        <position position="71"/>
    </location>
</feature>
<feature type="splice variant" id="VSP_022415" description="In isoform Short.">
    <location>
        <begin position="73"/>
        <end position="101"/>
    </location>
</feature>
<organism>
    <name type="scientific">Human immunodeficiency virus type 1 group M subtype B (isolate MN)</name>
    <name type="common">HIV-1</name>
    <dbReference type="NCBI Taxonomy" id="11696"/>
    <lineage>
        <taxon>Viruses</taxon>
        <taxon>Riboviria</taxon>
        <taxon>Pararnavirae</taxon>
        <taxon>Artverviricota</taxon>
        <taxon>Revtraviricetes</taxon>
        <taxon>Ortervirales</taxon>
        <taxon>Retroviridae</taxon>
        <taxon>Orthoretrovirinae</taxon>
        <taxon>Lentivirus</taxon>
        <taxon>Human immunodeficiency virus type 1</taxon>
    </lineage>
</organism>
<name>TAT_HV1MN</name>
<sequence length="101" mass="11634">MEPVDPRLEPWKHPGSQPKTACTTCYCKKCCFHCQVCFTKKALGISYGRKKRRQRRRAPEDSQTHQVSLPKQPAPQFRGDPTGPKESKKKVERETETHPVD</sequence>
<dbReference type="EMBL" id="M17449">
    <property type="protein sequence ID" value="AAA44851.1"/>
    <property type="molecule type" value="Genomic_RNA"/>
</dbReference>
<dbReference type="SMR" id="P05905"/>
<dbReference type="Proteomes" id="UP000007697">
    <property type="component" value="Genome"/>
</dbReference>
<dbReference type="GO" id="GO:0005576">
    <property type="term" value="C:extracellular region"/>
    <property type="evidence" value="ECO:0007669"/>
    <property type="project" value="UniProtKB-SubCell"/>
</dbReference>
<dbReference type="GO" id="GO:0030430">
    <property type="term" value="C:host cell cytoplasm"/>
    <property type="evidence" value="ECO:0007669"/>
    <property type="project" value="UniProtKB-SubCell"/>
</dbReference>
<dbReference type="GO" id="GO:0044196">
    <property type="term" value="C:host cell nucleolus"/>
    <property type="evidence" value="ECO:0007669"/>
    <property type="project" value="UniProtKB-SubCell"/>
</dbReference>
<dbReference type="GO" id="GO:0042805">
    <property type="term" value="F:actinin binding"/>
    <property type="evidence" value="ECO:0007669"/>
    <property type="project" value="UniProtKB-UniRule"/>
</dbReference>
<dbReference type="GO" id="GO:0030332">
    <property type="term" value="F:cyclin binding"/>
    <property type="evidence" value="ECO:0007669"/>
    <property type="project" value="UniProtKB-UniRule"/>
</dbReference>
<dbReference type="GO" id="GO:0046872">
    <property type="term" value="F:metal ion binding"/>
    <property type="evidence" value="ECO:0007669"/>
    <property type="project" value="UniProtKB-UniRule"/>
</dbReference>
<dbReference type="GO" id="GO:0019904">
    <property type="term" value="F:protein domain specific binding"/>
    <property type="evidence" value="ECO:0007669"/>
    <property type="project" value="UniProtKB-UniRule"/>
</dbReference>
<dbReference type="GO" id="GO:0004865">
    <property type="term" value="F:protein serine/threonine phosphatase inhibitor activity"/>
    <property type="evidence" value="ECO:0007669"/>
    <property type="project" value="UniProtKB-KW"/>
</dbReference>
<dbReference type="GO" id="GO:0001070">
    <property type="term" value="F:RNA-binding transcription regulator activity"/>
    <property type="evidence" value="ECO:0007669"/>
    <property type="project" value="UniProtKB-UniRule"/>
</dbReference>
<dbReference type="GO" id="GO:1990970">
    <property type="term" value="F:trans-activation response element binding"/>
    <property type="evidence" value="ECO:0007669"/>
    <property type="project" value="UniProtKB-UniRule"/>
</dbReference>
<dbReference type="GO" id="GO:0006351">
    <property type="term" value="P:DNA-templated transcription"/>
    <property type="evidence" value="ECO:0007669"/>
    <property type="project" value="UniProtKB-UniRule"/>
</dbReference>
<dbReference type="GO" id="GO:0032968">
    <property type="term" value="P:positive regulation of transcription elongation by RNA polymerase II"/>
    <property type="evidence" value="ECO:0007669"/>
    <property type="project" value="UniProtKB-UniRule"/>
</dbReference>
<dbReference type="GO" id="GO:0050434">
    <property type="term" value="P:positive regulation of viral transcription"/>
    <property type="evidence" value="ECO:0007669"/>
    <property type="project" value="UniProtKB-UniRule"/>
</dbReference>
<dbReference type="GO" id="GO:0039525">
    <property type="term" value="P:symbiont-mediated perturbation of host chromatin organization"/>
    <property type="evidence" value="ECO:0007669"/>
    <property type="project" value="UniProtKB-UniRule"/>
</dbReference>
<dbReference type="GO" id="GO:0052170">
    <property type="term" value="P:symbiont-mediated suppression of host innate immune response"/>
    <property type="evidence" value="ECO:0007669"/>
    <property type="project" value="UniProtKB-KW"/>
</dbReference>
<dbReference type="GO" id="GO:0039606">
    <property type="term" value="P:symbiont-mediated suppression of host translation initiation"/>
    <property type="evidence" value="ECO:0007669"/>
    <property type="project" value="UniProtKB-KW"/>
</dbReference>
<dbReference type="GO" id="GO:0039502">
    <property type="term" value="P:symbiont-mediated suppression of host type I interferon-mediated signaling pathway"/>
    <property type="evidence" value="ECO:0007669"/>
    <property type="project" value="UniProtKB-UniRule"/>
</dbReference>
<dbReference type="Gene3D" id="4.10.20.10">
    <property type="entry name" value="Tat domain"/>
    <property type="match status" value="1"/>
</dbReference>
<dbReference type="HAMAP" id="MF_04079">
    <property type="entry name" value="HIV_TAT"/>
    <property type="match status" value="1"/>
</dbReference>
<dbReference type="InterPro" id="IPR001831">
    <property type="entry name" value="IV_Tat"/>
</dbReference>
<dbReference type="InterPro" id="IPR036963">
    <property type="entry name" value="Tat_dom_sf"/>
</dbReference>
<dbReference type="Pfam" id="PF00539">
    <property type="entry name" value="Tat"/>
    <property type="match status" value="1"/>
</dbReference>
<dbReference type="PRINTS" id="PR00055">
    <property type="entry name" value="HIVTATDOMAIN"/>
</dbReference>
<organismHost>
    <name type="scientific">Homo sapiens</name>
    <name type="common">Human</name>
    <dbReference type="NCBI Taxonomy" id="9606"/>
</organismHost>
<proteinExistence type="inferred from homology"/>
<protein>
    <recommendedName>
        <fullName evidence="1">Protein Tat</fullName>
    </recommendedName>
    <alternativeName>
        <fullName evidence="1">Transactivating regulatory protein</fullName>
    </alternativeName>
</protein>
<reference key="1">
    <citation type="journal article" date="1988" name="Virology">
        <title>Envelope sequences of two new United States HIV-1 isolates.</title>
        <authorList>
            <person name="Gurgo C."/>
            <person name="Guo H.-G."/>
            <person name="Franchini G."/>
            <person name="Aldovini A."/>
            <person name="Collalti E."/>
            <person name="Farrell K."/>
            <person name="Wong-Staal F."/>
            <person name="Gallo R.C."/>
            <person name="Reitz M.S. Jr."/>
        </authorList>
    </citation>
    <scope>NUCLEOTIDE SEQUENCE [GENOMIC RNA]</scope>
</reference>
<reference key="2">
    <citation type="journal article" date="2005" name="Microbes Infect.">
        <title>Decoding Tat: the biology of HIV Tat posttranslational modifications.</title>
        <authorList>
            <person name="Hetzer C."/>
            <person name="Dormeyer W."/>
            <person name="Schnolzer M."/>
            <person name="Ott M."/>
        </authorList>
    </citation>
    <scope>REVIEW</scope>
    <scope>ALTERNATIVE SPLICING</scope>
</reference>
<reference key="3">
    <citation type="journal article" date="2006" name="Front. Biosci.">
        <title>The multiple functions of HIV-1 Tat: proliferation versus apoptosis.</title>
        <authorList>
            <person name="Peruzzi F."/>
        </authorList>
    </citation>
    <scope>REVIEW</scope>
</reference>
<reference key="4">
    <citation type="journal article" date="2006" name="Microbes Infect.">
        <title>HIV tat and neurotoxicity.</title>
        <authorList>
            <person name="King J.E."/>
            <person name="Eugenin E.A."/>
            <person name="Buckner C.M."/>
            <person name="Berman J.W."/>
        </authorList>
    </citation>
    <scope>REVIEW</scope>
</reference>
<evidence type="ECO:0000255" key="1">
    <source>
        <dbReference type="HAMAP-Rule" id="MF_04079"/>
    </source>
</evidence>
<evidence type="ECO:0000256" key="2">
    <source>
        <dbReference type="SAM" id="MobiDB-lite"/>
    </source>
</evidence>
<evidence type="ECO:0000305" key="3"/>
<comment type="function">
    <text evidence="1">Transcriptional activator that increases RNA Pol II processivity, thereby increasing the level of full-length viral transcripts. Recognizes a hairpin structure at the 5'-LTR of the nascent viral mRNAs referred to as the transactivation responsive RNA element (TAR) and recruits the cyclin T1-CDK9 complex (P-TEFb complex) that will in turn hyperphosphorylate the RNA polymerase II to allow efficient elongation. The CDK9 component of P-TEFb and other Tat-activated kinases hyperphosphorylate the C-terminus of RNA Pol II that becomes stabilized and much more processive. Other factors such as HTATSF1/Tat-SF1, SUPT5H/SPT5, and HTATIP2 are also important for Tat's function. Besides its effect on RNA Pol II processivity, Tat induces chromatin remodeling of proviral genes by recruiting the histone acetyltransferases (HATs) CREBBP, EP300 and PCAF to the chromatin. This also contributes to the increase in proviral transcription rate, especially when the provirus integrates in transcriptionally silent region of the host genome. To ensure maximal activation of the LTR, Tat mediates nuclear translocation of NF-kappa-B by interacting with host RELA. Through its interaction with host TBP, Tat may also modulate transcription initiation. Tat can reactivate a latently infected cell by penetrating in it and transactivating its LTR promoter. In the cytoplasm, Tat is thought to act as a translational activator of HIV-1 mRNAs.</text>
</comment>
<comment type="function">
    <text evidence="1">Extracellular circulating Tat can be endocytosed by surrounding uninfected cells via the binding to several surface receptors such as CD26, CXCR4, heparan sulfate proteoglycans (HSPG) or LDLR. Neurons are rarely infected, but they internalize Tat via their LDLR. Through its interaction with nuclear HATs, Tat is potentially able to control the acetylation-dependent cellular gene expression. Modulates the expression of many cellular genes involved in cell survival, proliferation or in coding for cytokines or cytokine receptors. Tat plays a role in T-cell and neurons apoptosis. Tat induced neurotoxicity and apoptosis probably contribute to neuroAIDS. Circulating Tat also acts as a chemokine-like and/or growth factor-like molecule that binds to specific receptors on the surface of the cells, affecting many cellular pathways. In the vascular system, Tat binds to ITGAV/ITGB3 and ITGA5/ITGB1 integrins dimers at the surface of endothelial cells and competes with bFGF for heparin-binding sites, leading to an excess of soluble bFGF.</text>
</comment>
<comment type="subunit">
    <text evidence="1">Interacts with host CCNT1. Associates with the P-TEFb complex composed at least of Tat, P-TEFb (CDK9 and CCNT1), TAR RNA, RNA Pol II. Recruits the HATs CREBBP, TAF1/TFIID, EP300, PCAF and GCN5L2. Interacts with host KAT5/Tip60; this interaction targets the latter to degradation. Interacts with the host deacetylase SIRT1. Interacts with host capping enzyme RNGTT; this interaction stimulates RNGTT. Binds to host KDR, and to the host integrins ITGAV/ITGB3 and ITGA5/ITGB1. Interacts with host KPNB1/importin beta-1 without previous binding to KPNA1/importin alpha-1. Interacts with EIF2AK2. Interacts with host nucleosome assembly protein NAP1L1; this interaction may be required for the transport of Tat within the nucleus, since the two proteins interact at the nuclear rim. Interacts with host C1QBP/SF2P32; this interaction involves lysine-acetylated Tat. Interacts with the host chemokine receptors CCR2, CCR3 and CXCR4. Interacts with host DPP4/CD26; this interaction may trigger an anti-proliferative effect. Interacts with host LDLR. Interacts with the host extracellular matrix metalloproteinase MMP1. Interacts with host PRMT6; this interaction mediates Tat's methylation. Interacts with, and is ubiquitinated by MDM2/Hdm2. Interacts with host PSMC3 and HTATIP2. Interacts with STAB1; this interaction may overcome SATB1-mediated repression of IL2 and IL2RA (interleukin) in T cells by binding to the same domain than HDAC1. Interacts (when acetylated) with human CDK13, thereby increasing HIV-1 mRNA splicing and promoting the production of the doubly spliced HIV-1 protein Nef. Interacts with host TBP; this interaction modulates the activity of transcriptional pre-initiation complex. Interacts with host RELA. Interacts with host PLSCR1; this interaction negatively regulates Tat transactivation activity by altering its subcellular distribution.</text>
</comment>
<comment type="subcellular location">
    <subcellularLocation>
        <location evidence="1">Host nucleus</location>
        <location evidence="1">Host nucleolus</location>
    </subcellularLocation>
    <subcellularLocation>
        <location evidence="1">Host cytoplasm</location>
    </subcellularLocation>
    <subcellularLocation>
        <location evidence="1">Secreted</location>
    </subcellularLocation>
    <text evidence="1">Probably localizes to both nuclear and nucleolar compartments. Nuclear localization is mediated through the interaction of the nuclear localization signal with importin KPNB1. Secretion occurs through a Golgi-independent pathway. Tat is released from infected cells to the extracellular space where it remains associated to the cell membrane, or is secreted into the cerebrospinal fluid and sera. Extracellular Tat can be endocytosed by surrounding uninfected cells via binding to several receptors depending on the cell type.</text>
</comment>
<comment type="alternative products">
    <event type="alternative splicing"/>
    <isoform>
        <id>P05905-1</id>
        <name>Long</name>
        <sequence type="displayed"/>
    </isoform>
    <isoform>
        <id>P05905-2</id>
        <name>Short</name>
        <sequence type="described" ref="VSP_022415"/>
    </isoform>
</comment>
<comment type="domain">
    <text evidence="1">The cell attachment site mediates the interaction with ITGAV/ITGB3 and ITGA5/ITGB1 integrins, leading to vascular cell migration and invasion. This interaction also provides endothelial cells with the adhesion signal they require to grow in response to mitogens.</text>
</comment>
<comment type="domain">
    <text evidence="1">The Cys-rich region may bind 2 zinc ions. This region is involved in binding to KAT5.</text>
</comment>
<comment type="domain">
    <text evidence="1">The transactivation domain mediates the interaction with CCNT1, GCN5L2, and MDM2.</text>
</comment>
<comment type="domain">
    <text evidence="1">The Arg-rich RNA-binding region binds the TAR RNA. This region also mediates the nuclear localization through direct binding to KPNB1 and is involved in Tat's transfer across cell membranes (protein transduction). The same region is required for the interaction with EP300, PCAF, EIF2AK2 and KDR.</text>
</comment>
<comment type="PTM">
    <text evidence="1">Asymmetrical arginine methylation by host PRMT6 seems to diminish the transactivation capacity of Tat and affects the interaction with host CCNT1.</text>
</comment>
<comment type="PTM">
    <text evidence="1">Acetylation by EP300, CREBBP, GCN5L2/GCN5 and PCAF regulates the transactivation activity of Tat. EP300-mediated acetylation of Lys-50 promotes dissociation of Tat from the TAR RNA through the competitive binding to PCAF's bromodomain. In addition, the non-acetylated Tat's N-terminus can also interact with PCAF. PCAF-mediated acetylation of Lys-28 enhances Tat's binding to CCNT1. Lys-50 is deacetylated by SIRT1.</text>
</comment>
<comment type="PTM">
    <text evidence="1">Polyubiquitination by host MDM2 does not target Tat to degradation, but activates its transactivation function and fosters interaction with CCNT1 and TAR RNA.</text>
</comment>
<comment type="PTM">
    <text evidence="1">Phosphorylated by EIF2AK2 on serine and threonine residues adjacent to the basic region important for TAR RNA binding and function. Phosphorylation of Tat by EIF2AK2 is dependent on the prior activation of EIF2AK2 by dsRNA.</text>
</comment>
<comment type="miscellaneous">
    <text>The MN isolate was taken from a pediatric AIDS patient in 1984.</text>
</comment>
<comment type="miscellaneous">
    <text evidence="1">HIV-1 lineages are divided in three main groups, M (for Major), O (for Outlier), and N (for New, or Non-M, Non-O). The vast majority of strains found worldwide belong to the group M. Group O seems to be endemic to and largely confined to Cameroon and neighboring countries in West Central Africa, where these viruses represent a small minority of HIV-1 strains. The group N is represented by a limited number of isolates from Cameroonian persons. The group M is further subdivided in 9 clades or subtypes (A to D, F to H, J and K).</text>
</comment>
<comment type="miscellaneous">
    <molecule>Isoform Short</molecule>
    <text evidence="3">Expressed in the late stage of the infection cycle, when unspliced viral RNAs are exported to the cytoplasm by the viral Rev protein.</text>
</comment>
<comment type="similarity">
    <text evidence="1">Belongs to the lentiviruses Tat family.</text>
</comment>
<accession>P05905</accession>
<gene>
    <name evidence="1" type="primary">tat</name>
</gene>